<keyword id="KW-0028">Amino-acid biosynthesis</keyword>
<keyword id="KW-0368">Histidine biosynthesis</keyword>
<keyword id="KW-0378">Hydrolase</keyword>
<keyword id="KW-0486">Methionine biosynthesis</keyword>
<keyword id="KW-0511">Multifunctional enzyme</keyword>
<keyword id="KW-0521">NADP</keyword>
<keyword id="KW-0554">One-carbon metabolism</keyword>
<keyword id="KW-0560">Oxidoreductase</keyword>
<keyword id="KW-0658">Purine biosynthesis</keyword>
<proteinExistence type="inferred from homology"/>
<reference key="1">
    <citation type="submission" date="2008-10" db="EMBL/GenBank/DDBJ databases">
        <title>Genome sequence of Bacillus anthracis str. CDC 684.</title>
        <authorList>
            <person name="Dodson R.J."/>
            <person name="Munk A.C."/>
            <person name="Brettin T."/>
            <person name="Bruce D."/>
            <person name="Detter C."/>
            <person name="Tapia R."/>
            <person name="Han C."/>
            <person name="Sutton G."/>
            <person name="Sims D."/>
        </authorList>
    </citation>
    <scope>NUCLEOTIDE SEQUENCE [LARGE SCALE GENOMIC DNA]</scope>
    <source>
        <strain>CDC 684 / NRRL 3495</strain>
    </source>
</reference>
<comment type="function">
    <text evidence="1">Catalyzes the oxidation of 5,10-methylenetetrahydrofolate to 5,10-methenyltetrahydrofolate and then the hydrolysis of 5,10-methenyltetrahydrofolate to 10-formyltetrahydrofolate.</text>
</comment>
<comment type="catalytic activity">
    <reaction evidence="1">
        <text>(6R)-5,10-methylene-5,6,7,8-tetrahydrofolate + NADP(+) = (6R)-5,10-methenyltetrahydrofolate + NADPH</text>
        <dbReference type="Rhea" id="RHEA:22812"/>
        <dbReference type="ChEBI" id="CHEBI:15636"/>
        <dbReference type="ChEBI" id="CHEBI:57455"/>
        <dbReference type="ChEBI" id="CHEBI:57783"/>
        <dbReference type="ChEBI" id="CHEBI:58349"/>
        <dbReference type="EC" id="1.5.1.5"/>
    </reaction>
</comment>
<comment type="catalytic activity">
    <reaction evidence="1">
        <text>(6R)-5,10-methenyltetrahydrofolate + H2O = (6R)-10-formyltetrahydrofolate + H(+)</text>
        <dbReference type="Rhea" id="RHEA:23700"/>
        <dbReference type="ChEBI" id="CHEBI:15377"/>
        <dbReference type="ChEBI" id="CHEBI:15378"/>
        <dbReference type="ChEBI" id="CHEBI:57455"/>
        <dbReference type="ChEBI" id="CHEBI:195366"/>
        <dbReference type="EC" id="3.5.4.9"/>
    </reaction>
</comment>
<comment type="pathway">
    <text evidence="1">One-carbon metabolism; tetrahydrofolate interconversion.</text>
</comment>
<comment type="subunit">
    <text evidence="1">Homodimer.</text>
</comment>
<comment type="similarity">
    <text evidence="1">Belongs to the tetrahydrofolate dehydrogenase/cyclohydrolase family.</text>
</comment>
<sequence length="286" mass="31181">MVAVIIKGNEVAEKKRAQLKEEVVKLKEQGIVPGLAVILVGEDPASRSYVKGKEKGCEQVGIYSELIEFPETITEERLLAEIDRLNGDDRINGILVQLPLPKHIEEKAIIERISPEKDVDGFHPISVGRMMTGQDTFLPCTPHGIVELVKETNLDISGKHVVVIGRSNIVGKPVGQLFLNENATVTYCHSKTQNMKELTKLADILIVAVGRPKMVTADYIKEGAVVIDVGVNRLETGKLCGDVDFDNVLDVASYITPVPKGVGPMTITMLLHNTVESAKRAGVVCK</sequence>
<feature type="chain" id="PRO_1000185593" description="Bifunctional protein FolD">
    <location>
        <begin position="1"/>
        <end position="286"/>
    </location>
</feature>
<feature type="binding site" evidence="1">
    <location>
        <begin position="165"/>
        <end position="167"/>
    </location>
    <ligand>
        <name>NADP(+)</name>
        <dbReference type="ChEBI" id="CHEBI:58349"/>
    </ligand>
</feature>
<feature type="binding site" evidence="1">
    <location>
        <position position="190"/>
    </location>
    <ligand>
        <name>NADP(+)</name>
        <dbReference type="ChEBI" id="CHEBI:58349"/>
    </ligand>
</feature>
<feature type="binding site" evidence="1">
    <location>
        <position position="231"/>
    </location>
    <ligand>
        <name>NADP(+)</name>
        <dbReference type="ChEBI" id="CHEBI:58349"/>
    </ligand>
</feature>
<evidence type="ECO:0000255" key="1">
    <source>
        <dbReference type="HAMAP-Rule" id="MF_01576"/>
    </source>
</evidence>
<accession>C3LJV5</accession>
<gene>
    <name evidence="1" type="primary">folD</name>
    <name type="ordered locus">BAMEG_4440</name>
</gene>
<dbReference type="EC" id="1.5.1.5" evidence="1"/>
<dbReference type="EC" id="3.5.4.9" evidence="1"/>
<dbReference type="EMBL" id="CP001215">
    <property type="protein sequence ID" value="ACP12819.1"/>
    <property type="molecule type" value="Genomic_DNA"/>
</dbReference>
<dbReference type="RefSeq" id="WP_000226722.1">
    <property type="nucleotide sequence ID" value="NC_012581.1"/>
</dbReference>
<dbReference type="SMR" id="C3LJV5"/>
<dbReference type="GeneID" id="45024064"/>
<dbReference type="KEGG" id="bah:BAMEG_4440"/>
<dbReference type="HOGENOM" id="CLU_034045_2_1_9"/>
<dbReference type="UniPathway" id="UPA00193"/>
<dbReference type="GO" id="GO:0005829">
    <property type="term" value="C:cytosol"/>
    <property type="evidence" value="ECO:0007669"/>
    <property type="project" value="TreeGrafter"/>
</dbReference>
<dbReference type="GO" id="GO:0004477">
    <property type="term" value="F:methenyltetrahydrofolate cyclohydrolase activity"/>
    <property type="evidence" value="ECO:0007669"/>
    <property type="project" value="UniProtKB-UniRule"/>
</dbReference>
<dbReference type="GO" id="GO:0004488">
    <property type="term" value="F:methylenetetrahydrofolate dehydrogenase (NADP+) activity"/>
    <property type="evidence" value="ECO:0007669"/>
    <property type="project" value="UniProtKB-UniRule"/>
</dbReference>
<dbReference type="GO" id="GO:0000105">
    <property type="term" value="P:L-histidine biosynthetic process"/>
    <property type="evidence" value="ECO:0007669"/>
    <property type="project" value="UniProtKB-KW"/>
</dbReference>
<dbReference type="GO" id="GO:0009086">
    <property type="term" value="P:methionine biosynthetic process"/>
    <property type="evidence" value="ECO:0007669"/>
    <property type="project" value="UniProtKB-KW"/>
</dbReference>
<dbReference type="GO" id="GO:0006164">
    <property type="term" value="P:purine nucleotide biosynthetic process"/>
    <property type="evidence" value="ECO:0007669"/>
    <property type="project" value="UniProtKB-KW"/>
</dbReference>
<dbReference type="GO" id="GO:0035999">
    <property type="term" value="P:tetrahydrofolate interconversion"/>
    <property type="evidence" value="ECO:0007669"/>
    <property type="project" value="UniProtKB-UniRule"/>
</dbReference>
<dbReference type="CDD" id="cd01080">
    <property type="entry name" value="NAD_bind_m-THF_DH_Cyclohyd"/>
    <property type="match status" value="1"/>
</dbReference>
<dbReference type="FunFam" id="3.40.50.10860:FF:000001">
    <property type="entry name" value="Bifunctional protein FolD"/>
    <property type="match status" value="1"/>
</dbReference>
<dbReference type="FunFam" id="3.40.50.720:FF:000006">
    <property type="entry name" value="Bifunctional protein FolD"/>
    <property type="match status" value="1"/>
</dbReference>
<dbReference type="Gene3D" id="3.40.50.10860">
    <property type="entry name" value="Leucine Dehydrogenase, chain A, domain 1"/>
    <property type="match status" value="1"/>
</dbReference>
<dbReference type="Gene3D" id="3.40.50.720">
    <property type="entry name" value="NAD(P)-binding Rossmann-like Domain"/>
    <property type="match status" value="1"/>
</dbReference>
<dbReference type="HAMAP" id="MF_01576">
    <property type="entry name" value="THF_DHG_CYH"/>
    <property type="match status" value="1"/>
</dbReference>
<dbReference type="InterPro" id="IPR046346">
    <property type="entry name" value="Aminoacid_DH-like_N_sf"/>
</dbReference>
<dbReference type="InterPro" id="IPR036291">
    <property type="entry name" value="NAD(P)-bd_dom_sf"/>
</dbReference>
<dbReference type="InterPro" id="IPR000672">
    <property type="entry name" value="THF_DH/CycHdrlase"/>
</dbReference>
<dbReference type="InterPro" id="IPR020630">
    <property type="entry name" value="THF_DH/CycHdrlase_cat_dom"/>
</dbReference>
<dbReference type="InterPro" id="IPR020867">
    <property type="entry name" value="THF_DH/CycHdrlase_CS"/>
</dbReference>
<dbReference type="InterPro" id="IPR020631">
    <property type="entry name" value="THF_DH/CycHdrlase_NAD-bd_dom"/>
</dbReference>
<dbReference type="NCBIfam" id="NF008058">
    <property type="entry name" value="PRK10792.1"/>
    <property type="match status" value="1"/>
</dbReference>
<dbReference type="NCBIfam" id="NF010783">
    <property type="entry name" value="PRK14186.1"/>
    <property type="match status" value="1"/>
</dbReference>
<dbReference type="PANTHER" id="PTHR48099:SF5">
    <property type="entry name" value="C-1-TETRAHYDROFOLATE SYNTHASE, CYTOPLASMIC"/>
    <property type="match status" value="1"/>
</dbReference>
<dbReference type="PANTHER" id="PTHR48099">
    <property type="entry name" value="C-1-TETRAHYDROFOLATE SYNTHASE, CYTOPLASMIC-RELATED"/>
    <property type="match status" value="1"/>
</dbReference>
<dbReference type="Pfam" id="PF00763">
    <property type="entry name" value="THF_DHG_CYH"/>
    <property type="match status" value="1"/>
</dbReference>
<dbReference type="Pfam" id="PF02882">
    <property type="entry name" value="THF_DHG_CYH_C"/>
    <property type="match status" value="1"/>
</dbReference>
<dbReference type="PRINTS" id="PR00085">
    <property type="entry name" value="THFDHDRGNASE"/>
</dbReference>
<dbReference type="SUPFAM" id="SSF53223">
    <property type="entry name" value="Aminoacid dehydrogenase-like, N-terminal domain"/>
    <property type="match status" value="1"/>
</dbReference>
<dbReference type="SUPFAM" id="SSF51735">
    <property type="entry name" value="NAD(P)-binding Rossmann-fold domains"/>
    <property type="match status" value="1"/>
</dbReference>
<dbReference type="PROSITE" id="PS00767">
    <property type="entry name" value="THF_DHG_CYH_2"/>
    <property type="match status" value="1"/>
</dbReference>
<organism>
    <name type="scientific">Bacillus anthracis (strain CDC 684 / NRRL 3495)</name>
    <dbReference type="NCBI Taxonomy" id="568206"/>
    <lineage>
        <taxon>Bacteria</taxon>
        <taxon>Bacillati</taxon>
        <taxon>Bacillota</taxon>
        <taxon>Bacilli</taxon>
        <taxon>Bacillales</taxon>
        <taxon>Bacillaceae</taxon>
        <taxon>Bacillus</taxon>
        <taxon>Bacillus cereus group</taxon>
    </lineage>
</organism>
<protein>
    <recommendedName>
        <fullName evidence="1">Bifunctional protein FolD</fullName>
    </recommendedName>
    <domain>
        <recommendedName>
            <fullName evidence="1">Methylenetetrahydrofolate dehydrogenase</fullName>
            <ecNumber evidence="1">1.5.1.5</ecNumber>
        </recommendedName>
    </domain>
    <domain>
        <recommendedName>
            <fullName evidence="1">Methenyltetrahydrofolate cyclohydrolase</fullName>
            <ecNumber evidence="1">3.5.4.9</ecNumber>
        </recommendedName>
    </domain>
</protein>
<name>FOLD_BACAC</name>